<sequence>MASSPLPGPNDILLASPSSAFQPDALSQPRPGHANLKPNQVGQVILYGIPIVSLVIDGQERLCLAQISNTLLKNFSYNEIHNRRVALGITCVQCTPVQLEILRRAGAMPISSRRCGMITKREAERLCKSFLGENRPPKLPDNFAFDVSHECAWGCRGSFIPARYNSSRAKCIKCSYCNMYFSPNKFIFHSHRTPDAKYTQPDAANFNSWRRHLKLTDKSPQDELVFAWEDVKAMFNGGSRKRALPQPSAHPACHPLSSVKAAAVAAAAAVAGGGGLLGPHLLGAPPPPPPPPPLAELAGAPHAHHKRPRFDDDDDSLQEAAVVAAASLSAAAASLSVAAATGGAGPGAGGPGGGCVAGVGVGASAGAGAAAGTKGPRSYPVIPVPSKGSFGGVLQKFPGCGGLFPHPYTFPAAAAAFGLCHKKEDAGTAAEALGGAGAGSAGAAPKAGLSGLFWPAGRKDAFYPPFCMFWPPRTPGGLPVPTYLQPPPQPPSALGCALGDSPALLRQAFLDLAEPGGAGGSAEAAPPPGQPPPVVANGPGSGPPATGGTGARDTLFESPPGGSGGDCSAGSTPPAEQGVTSGTGSASSGAGSVGTRVPAPHHPHLLEGRKAGGGSYHHSSAFRPVGGKDDAESLAKLHGASAGTPHSAPAHHHHHHHHPHHHHHHPPQPPSPLLLLQPQPDEPGSERHHPAPPPPPPPPPLAPQPHHRGLLSPEGTSCSYPSEDSSEDEEDEEEEQEVDVEGHKPLEGEEEEDGRDPEDEEEEDEETRVLLGDSLVGGGRFLQGRGLSEKGSGRDRTTPAVGAFPLALNSSRLLQEDGKLGDSGGSDLPAPPPPPLAPQKASSSGGSRPGSPVHHPSLEEEPSYKDNQKPKENNQVIISTKDDNFSDKNKGHGFFITDSDSSGDFWRERSGEHTQETNSPHSLKKDVENMGKEELQKVLFEQIDLRRRLEQEFQVLKGNTSFPVFNNFQDQMKRELAYREEMVQQLQIIPYAASLIRKEKLGAHLSKS</sequence>
<protein>
    <recommendedName>
        <fullName evidence="5">SKI family transcriptional corepressor 2</fullName>
    </recommendedName>
    <alternativeName>
        <fullName>Fussel-18 homolog</fullName>
    </alternativeName>
    <alternativeName>
        <fullName>LBX1 corepressor 1-like protein</fullName>
    </alternativeName>
    <alternativeName>
        <fullName>Ladybird homeobox corepressor 1-like protein</fullName>
    </alternativeName>
    <alternativeName>
        <fullName>Transcriptional corepressor Corl2</fullName>
    </alternativeName>
</protein>
<keyword id="KW-0963">Cytoplasm</keyword>
<keyword id="KW-0539">Nucleus</keyword>
<keyword id="KW-1185">Reference proteome</keyword>
<keyword id="KW-0678">Repressor</keyword>
<keyword id="KW-0804">Transcription</keyword>
<keyword id="KW-0805">Transcription regulation</keyword>
<proteinExistence type="evidence at protein level"/>
<comment type="function">
    <text evidence="1 4">Acts as a TGF-beta antagonist in the nervous system (By similarity). Exhibits transcriptional repressor activity.</text>
</comment>
<comment type="subunit">
    <text evidence="1">Interacts with SMAD2 and SMAD3.</text>
</comment>
<comment type="subcellular location">
    <subcellularLocation>
        <location evidence="4">Nucleus</location>
    </subcellularLocation>
    <subcellularLocation>
        <location evidence="1">Cytoplasm</location>
    </subcellularLocation>
</comment>
<comment type="tissue specificity">
    <text evidence="4">Expression is restricted to adult and embryonic central nervous system. Expressed at high levels in the developing cerebellum, ventral metencephalon and myelencephalon at 12.5 dpc (at protein level). In the adult cerebellum, expressed specifically in Purkinje cells.</text>
</comment>
<comment type="developmental stage">
    <text evidence="3 4">First detected at 11 dpc and expression continues into adulthood with higher levels in embryonic than adult brain. In developing brain, not expressed in neural progenitors during the proliferative phase but expression is detected in postmitotic neural precursors shortly after exiting the cell cycle.</text>
</comment>
<comment type="similarity">
    <text evidence="5">Belongs to the SKI family.</text>
</comment>
<evidence type="ECO:0000250" key="1"/>
<evidence type="ECO:0000256" key="2">
    <source>
        <dbReference type="SAM" id="MobiDB-lite"/>
    </source>
</evidence>
<evidence type="ECO:0000269" key="3">
    <source>
    </source>
</evidence>
<evidence type="ECO:0000269" key="4">
    <source>
    </source>
</evidence>
<evidence type="ECO:0000305" key="5"/>
<evidence type="ECO:0000312" key="6">
    <source>
        <dbReference type="MGI" id="MGI:3645984"/>
    </source>
</evidence>
<accession>A7M7C7</accession>
<dbReference type="EMBL" id="AB358976">
    <property type="protein sequence ID" value="BAF76044.1"/>
    <property type="molecule type" value="mRNA"/>
</dbReference>
<dbReference type="CCDS" id="CCDS50322.1"/>
<dbReference type="RefSeq" id="NP_001103213.1">
    <property type="nucleotide sequence ID" value="NM_001109743.1"/>
</dbReference>
<dbReference type="RefSeq" id="XP_006526499.1">
    <property type="nucleotide sequence ID" value="XM_006526436.3"/>
</dbReference>
<dbReference type="SMR" id="A7M7C7"/>
<dbReference type="FunCoup" id="A7M7C7">
    <property type="interactions" value="361"/>
</dbReference>
<dbReference type="STRING" id="10090.ENSMUSP00000132338"/>
<dbReference type="iPTMnet" id="A7M7C7"/>
<dbReference type="PhosphoSitePlus" id="A7M7C7"/>
<dbReference type="PaxDb" id="10090-ENSMUSP00000132338"/>
<dbReference type="ProteomicsDB" id="261406"/>
<dbReference type="Antibodypedia" id="58871">
    <property type="antibodies" value="66 antibodies from 14 providers"/>
</dbReference>
<dbReference type="Ensembl" id="ENSMUST00000166956.2">
    <property type="protein sequence ID" value="ENSMUSP00000132338.2"/>
    <property type="gene ID" value="ENSMUSG00000091519.2"/>
</dbReference>
<dbReference type="GeneID" id="664805"/>
<dbReference type="KEGG" id="mmu:664805"/>
<dbReference type="UCSC" id="uc008fqq.1">
    <property type="organism name" value="mouse"/>
</dbReference>
<dbReference type="AGR" id="MGI:3645984"/>
<dbReference type="CTD" id="652991"/>
<dbReference type="MGI" id="MGI:3645984">
    <property type="gene designation" value="Skor2"/>
</dbReference>
<dbReference type="VEuPathDB" id="HostDB:ENSMUSG00000091519"/>
<dbReference type="eggNOG" id="ENOG502QQC2">
    <property type="taxonomic scope" value="Eukaryota"/>
</dbReference>
<dbReference type="GeneTree" id="ENSGT00940000160474"/>
<dbReference type="HOGENOM" id="CLU_011930_1_0_1"/>
<dbReference type="InParanoid" id="A7M7C7"/>
<dbReference type="OMA" id="SAHPACH"/>
<dbReference type="OrthoDB" id="3938623at2759"/>
<dbReference type="PhylomeDB" id="A7M7C7"/>
<dbReference type="TreeFam" id="TF324133"/>
<dbReference type="BioGRID-ORCS" id="664805">
    <property type="hits" value="1 hit in 78 CRISPR screens"/>
</dbReference>
<dbReference type="PRO" id="PR:A7M7C7"/>
<dbReference type="Proteomes" id="UP000000589">
    <property type="component" value="Chromosome 18"/>
</dbReference>
<dbReference type="RNAct" id="A7M7C7">
    <property type="molecule type" value="protein"/>
</dbReference>
<dbReference type="Bgee" id="ENSMUSG00000091519">
    <property type="expression patterns" value="Expressed in Purkinje cell layer of cerebellar cortex and 9 other cell types or tissues"/>
</dbReference>
<dbReference type="GO" id="GO:0005737">
    <property type="term" value="C:cytoplasm"/>
    <property type="evidence" value="ECO:0007669"/>
    <property type="project" value="UniProtKB-SubCell"/>
</dbReference>
<dbReference type="GO" id="GO:0005634">
    <property type="term" value="C:nucleus"/>
    <property type="evidence" value="ECO:0000314"/>
    <property type="project" value="UniProtKB"/>
</dbReference>
<dbReference type="GO" id="GO:0003682">
    <property type="term" value="F:chromatin binding"/>
    <property type="evidence" value="ECO:0000314"/>
    <property type="project" value="MGI"/>
</dbReference>
<dbReference type="GO" id="GO:0042826">
    <property type="term" value="F:histone deacetylase binding"/>
    <property type="evidence" value="ECO:0000353"/>
    <property type="project" value="MGI"/>
</dbReference>
<dbReference type="GO" id="GO:1990837">
    <property type="term" value="F:sequence-specific double-stranded DNA binding"/>
    <property type="evidence" value="ECO:0007669"/>
    <property type="project" value="Ensembl"/>
</dbReference>
<dbReference type="GO" id="GO:0046332">
    <property type="term" value="F:SMAD binding"/>
    <property type="evidence" value="ECO:0000353"/>
    <property type="project" value="MGI"/>
</dbReference>
<dbReference type="GO" id="GO:0048468">
    <property type="term" value="P:cell development"/>
    <property type="evidence" value="ECO:0000315"/>
    <property type="project" value="MGI"/>
</dbReference>
<dbReference type="GO" id="GO:0021702">
    <property type="term" value="P:cerebellar Purkinje cell differentiation"/>
    <property type="evidence" value="ECO:0000315"/>
    <property type="project" value="MGI"/>
</dbReference>
<dbReference type="GO" id="GO:0021587">
    <property type="term" value="P:cerebellum morphogenesis"/>
    <property type="evidence" value="ECO:0000315"/>
    <property type="project" value="MGI"/>
</dbReference>
<dbReference type="GO" id="GO:0030514">
    <property type="term" value="P:negative regulation of BMP signaling pathway"/>
    <property type="evidence" value="ECO:0000316"/>
    <property type="project" value="MGI"/>
</dbReference>
<dbReference type="GO" id="GO:0000122">
    <property type="term" value="P:negative regulation of transcription by RNA polymerase II"/>
    <property type="evidence" value="ECO:0000314"/>
    <property type="project" value="UniProtKB"/>
</dbReference>
<dbReference type="GO" id="GO:0045880">
    <property type="term" value="P:positive regulation of smoothened signaling pathway"/>
    <property type="evidence" value="ECO:0000315"/>
    <property type="project" value="MGI"/>
</dbReference>
<dbReference type="GO" id="GO:0021936">
    <property type="term" value="P:regulation of cerebellar granule cell precursor proliferation"/>
    <property type="evidence" value="ECO:0000315"/>
    <property type="project" value="MGI"/>
</dbReference>
<dbReference type="GO" id="GO:0048814">
    <property type="term" value="P:regulation of dendrite morphogenesis"/>
    <property type="evidence" value="ECO:0000315"/>
    <property type="project" value="MGI"/>
</dbReference>
<dbReference type="GO" id="GO:1902692">
    <property type="term" value="P:regulation of neuroblast proliferation"/>
    <property type="evidence" value="ECO:0000315"/>
    <property type="project" value="MGI"/>
</dbReference>
<dbReference type="GO" id="GO:0007224">
    <property type="term" value="P:smoothened signaling pathway"/>
    <property type="evidence" value="ECO:0000315"/>
    <property type="project" value="MGI"/>
</dbReference>
<dbReference type="CDD" id="cd21080">
    <property type="entry name" value="DHD_Skor"/>
    <property type="match status" value="1"/>
</dbReference>
<dbReference type="FunFam" id="3.10.390.10:FF:000001">
    <property type="entry name" value="SKI family transcriptional corepressor 1"/>
    <property type="match status" value="1"/>
</dbReference>
<dbReference type="FunFam" id="3.10.260.20:FF:000003">
    <property type="entry name" value="SKI family transcriptional corepressor 1 homolog-B-like"/>
    <property type="match status" value="1"/>
</dbReference>
<dbReference type="Gene3D" id="3.10.390.10">
    <property type="entry name" value="SAND domain-like"/>
    <property type="match status" value="1"/>
</dbReference>
<dbReference type="Gene3D" id="3.10.260.20">
    <property type="entry name" value="Ski"/>
    <property type="match status" value="1"/>
</dbReference>
<dbReference type="InterPro" id="IPR014890">
    <property type="entry name" value="c-SKI_SMAD4-bd_dom"/>
</dbReference>
<dbReference type="InterPro" id="IPR009061">
    <property type="entry name" value="DNA-bd_dom_put_sf"/>
</dbReference>
<dbReference type="InterPro" id="IPR010919">
    <property type="entry name" value="SAND-like_dom_sf"/>
</dbReference>
<dbReference type="InterPro" id="IPR003380">
    <property type="entry name" value="SKI/SNO/DAC"/>
</dbReference>
<dbReference type="InterPro" id="IPR037000">
    <property type="entry name" value="Ski_DNA-bd_sf"/>
</dbReference>
<dbReference type="InterPro" id="IPR023216">
    <property type="entry name" value="Tscrpt_reg_SKI_SnoN"/>
</dbReference>
<dbReference type="PANTHER" id="PTHR10005:SF7">
    <property type="entry name" value="SKI FAMILY TRANSCRIPTIONAL COREPRESSOR 2"/>
    <property type="match status" value="1"/>
</dbReference>
<dbReference type="PANTHER" id="PTHR10005">
    <property type="entry name" value="SKI ONCOGENE-RELATED"/>
    <property type="match status" value="1"/>
</dbReference>
<dbReference type="Pfam" id="PF08782">
    <property type="entry name" value="c-SKI_SMAD_bind"/>
    <property type="match status" value="1"/>
</dbReference>
<dbReference type="Pfam" id="PF02437">
    <property type="entry name" value="Ski_Sno_DHD"/>
    <property type="match status" value="1"/>
</dbReference>
<dbReference type="SMART" id="SM01046">
    <property type="entry name" value="c-SKI_SMAD_bind"/>
    <property type="match status" value="1"/>
</dbReference>
<dbReference type="SUPFAM" id="SSF46955">
    <property type="entry name" value="Putative DNA-binding domain"/>
    <property type="match status" value="1"/>
</dbReference>
<dbReference type="SUPFAM" id="SSF63763">
    <property type="entry name" value="SAND domain-like"/>
    <property type="match status" value="1"/>
</dbReference>
<feature type="chain" id="PRO_0000334612" description="SKI family transcriptional corepressor 2">
    <location>
        <begin position="1"/>
        <end position="1008"/>
    </location>
</feature>
<feature type="region of interest" description="Disordered" evidence="2">
    <location>
        <begin position="280"/>
        <end position="315"/>
    </location>
</feature>
<feature type="region of interest" description="Disordered" evidence="2">
    <location>
        <begin position="514"/>
        <end position="927"/>
    </location>
</feature>
<feature type="compositionally biased region" description="Pro residues" evidence="2">
    <location>
        <begin position="284"/>
        <end position="294"/>
    </location>
</feature>
<feature type="compositionally biased region" description="Pro residues" evidence="2">
    <location>
        <begin position="525"/>
        <end position="534"/>
    </location>
</feature>
<feature type="compositionally biased region" description="Low complexity" evidence="2">
    <location>
        <begin position="535"/>
        <end position="544"/>
    </location>
</feature>
<feature type="compositionally biased region" description="Low complexity" evidence="2">
    <location>
        <begin position="578"/>
        <end position="595"/>
    </location>
</feature>
<feature type="compositionally biased region" description="Basic and acidic residues" evidence="2">
    <location>
        <begin position="626"/>
        <end position="635"/>
    </location>
</feature>
<feature type="compositionally biased region" description="Basic residues" evidence="2">
    <location>
        <begin position="649"/>
        <end position="666"/>
    </location>
</feature>
<feature type="compositionally biased region" description="Pro residues" evidence="2">
    <location>
        <begin position="691"/>
        <end position="703"/>
    </location>
</feature>
<feature type="compositionally biased region" description="Acidic residues" evidence="2">
    <location>
        <begin position="724"/>
        <end position="739"/>
    </location>
</feature>
<feature type="compositionally biased region" description="Acidic residues" evidence="2">
    <location>
        <begin position="748"/>
        <end position="766"/>
    </location>
</feature>
<feature type="compositionally biased region" description="Basic and acidic residues" evidence="2">
    <location>
        <begin position="787"/>
        <end position="797"/>
    </location>
</feature>
<feature type="compositionally biased region" description="Low complexity" evidence="2">
    <location>
        <begin position="842"/>
        <end position="855"/>
    </location>
</feature>
<feature type="compositionally biased region" description="Basic and acidic residues" evidence="2">
    <location>
        <begin position="856"/>
        <end position="872"/>
    </location>
</feature>
<feature type="compositionally biased region" description="Basic and acidic residues" evidence="2">
    <location>
        <begin position="880"/>
        <end position="890"/>
    </location>
</feature>
<feature type="compositionally biased region" description="Basic and acidic residues" evidence="2">
    <location>
        <begin position="905"/>
        <end position="915"/>
    </location>
</feature>
<gene>
    <name evidence="6" type="primary">Skor2</name>
    <name type="synonym">Corl2</name>
</gene>
<reference key="1">
    <citation type="journal article" date="2008" name="Gene Expr. Patterns">
        <title>Identification of a novel transcriptional corepressor, Corl2, as a cerebellar Purkinje cell-selective marker.</title>
        <authorList>
            <person name="Minaki Y."/>
            <person name="Nakatani T."/>
            <person name="Mizuhara E."/>
            <person name="Inoue T."/>
            <person name="Ono Y."/>
        </authorList>
    </citation>
    <scope>NUCLEOTIDE SEQUENCE [MRNA]</scope>
    <scope>FUNCTION</scope>
    <scope>SUBCELLULAR LOCATION</scope>
    <scope>TISSUE SPECIFICITY</scope>
    <scope>DEVELOPMENTAL STAGE</scope>
    <source>
        <tissue>Embryonic brain</tissue>
    </source>
</reference>
<reference key="2">
    <citation type="journal article" date="2005" name="Lab. Invest.">
        <title>Cloning and functional characterization of a new Ski homolog, Fussel-18, specifically expressed in neuronal tissues.</title>
        <authorList>
            <person name="Arndt S."/>
            <person name="Poser I."/>
            <person name="Schubert T."/>
            <person name="Moser M."/>
            <person name="Bosserhoff A.-K."/>
        </authorList>
    </citation>
    <scope>DEVELOPMENTAL STAGE</scope>
</reference>
<organism>
    <name type="scientific">Mus musculus</name>
    <name type="common">Mouse</name>
    <dbReference type="NCBI Taxonomy" id="10090"/>
    <lineage>
        <taxon>Eukaryota</taxon>
        <taxon>Metazoa</taxon>
        <taxon>Chordata</taxon>
        <taxon>Craniata</taxon>
        <taxon>Vertebrata</taxon>
        <taxon>Euteleostomi</taxon>
        <taxon>Mammalia</taxon>
        <taxon>Eutheria</taxon>
        <taxon>Euarchontoglires</taxon>
        <taxon>Glires</taxon>
        <taxon>Rodentia</taxon>
        <taxon>Myomorpha</taxon>
        <taxon>Muroidea</taxon>
        <taxon>Muridae</taxon>
        <taxon>Murinae</taxon>
        <taxon>Mus</taxon>
        <taxon>Mus</taxon>
    </lineage>
</organism>
<name>SKOR2_MOUSE</name>